<name>RL10L_MACFA</name>
<keyword id="KW-0963">Cytoplasm</keyword>
<keyword id="KW-0221">Differentiation</keyword>
<keyword id="KW-0469">Meiosis</keyword>
<keyword id="KW-1185">Reference proteome</keyword>
<keyword id="KW-0687">Ribonucleoprotein</keyword>
<keyword id="KW-0689">Ribosomal protein</keyword>
<keyword id="KW-0744">Spermatogenesis</keyword>
<protein>
    <recommendedName>
        <fullName evidence="3">Large ribosomal subunit protein uL16-like</fullName>
    </recommendedName>
    <alternativeName>
        <fullName>60S ribosomal protein L10-like</fullName>
    </alternativeName>
</protein>
<dbReference type="EMBL" id="AB178981">
    <property type="protein sequence ID" value="BAE02032.1"/>
    <property type="molecule type" value="mRNA"/>
</dbReference>
<dbReference type="RefSeq" id="NP_001272159.1">
    <property type="nucleotide sequence ID" value="NM_001285230.1"/>
</dbReference>
<dbReference type="RefSeq" id="XP_045251059.1">
    <property type="nucleotide sequence ID" value="XM_045395124.2"/>
</dbReference>
<dbReference type="SMR" id="Q4R4D3"/>
<dbReference type="Ensembl" id="ENSMFAT00000077259.1">
    <property type="protein sequence ID" value="ENSMFAP00000053587.1"/>
    <property type="gene ID" value="ENSMFAG00000053210.1"/>
</dbReference>
<dbReference type="GeneID" id="101925609"/>
<dbReference type="eggNOG" id="KOG0857">
    <property type="taxonomic scope" value="Eukaryota"/>
</dbReference>
<dbReference type="GeneTree" id="ENSGT00390000003897"/>
<dbReference type="Proteomes" id="UP000233100">
    <property type="component" value="Chromosome 7"/>
</dbReference>
<dbReference type="GO" id="GO:0022625">
    <property type="term" value="C:cytosolic large ribosomal subunit"/>
    <property type="evidence" value="ECO:0000250"/>
    <property type="project" value="UniProtKB"/>
</dbReference>
<dbReference type="GO" id="GO:0005783">
    <property type="term" value="C:endoplasmic reticulum"/>
    <property type="evidence" value="ECO:0007669"/>
    <property type="project" value="Ensembl"/>
</dbReference>
<dbReference type="GO" id="GO:0005634">
    <property type="term" value="C:nucleus"/>
    <property type="evidence" value="ECO:0007669"/>
    <property type="project" value="Ensembl"/>
</dbReference>
<dbReference type="GO" id="GO:0005840">
    <property type="term" value="C:ribosome"/>
    <property type="evidence" value="ECO:0000250"/>
    <property type="project" value="UniProtKB"/>
</dbReference>
<dbReference type="GO" id="GO:0003735">
    <property type="term" value="F:structural constituent of ribosome"/>
    <property type="evidence" value="ECO:0000250"/>
    <property type="project" value="UniProtKB"/>
</dbReference>
<dbReference type="GO" id="GO:0030154">
    <property type="term" value="P:cell differentiation"/>
    <property type="evidence" value="ECO:0007669"/>
    <property type="project" value="UniProtKB-KW"/>
</dbReference>
<dbReference type="GO" id="GO:0007141">
    <property type="term" value="P:male meiosis I"/>
    <property type="evidence" value="ECO:0000250"/>
    <property type="project" value="UniProtKB"/>
</dbReference>
<dbReference type="GO" id="GO:0000027">
    <property type="term" value="P:ribosomal large subunit assembly"/>
    <property type="evidence" value="ECO:0000250"/>
    <property type="project" value="UniProtKB"/>
</dbReference>
<dbReference type="GO" id="GO:0007283">
    <property type="term" value="P:spermatogenesis"/>
    <property type="evidence" value="ECO:0000250"/>
    <property type="project" value="UniProtKB"/>
</dbReference>
<dbReference type="GO" id="GO:0006412">
    <property type="term" value="P:translation"/>
    <property type="evidence" value="ECO:0007669"/>
    <property type="project" value="InterPro"/>
</dbReference>
<dbReference type="CDD" id="cd01433">
    <property type="entry name" value="Ribosomal_L16_L10e"/>
    <property type="match status" value="1"/>
</dbReference>
<dbReference type="FunFam" id="3.30.60.300:FF:000001">
    <property type="entry name" value="60S ribosomal protein L10"/>
    <property type="match status" value="1"/>
</dbReference>
<dbReference type="FunFam" id="3.90.1170.10:FF:000002">
    <property type="entry name" value="60S ribosomal protein L10"/>
    <property type="match status" value="1"/>
</dbReference>
<dbReference type="Gene3D" id="3.30.60.300">
    <property type="match status" value="1"/>
</dbReference>
<dbReference type="Gene3D" id="3.90.1170.10">
    <property type="entry name" value="Ribosomal protein L10e/L16"/>
    <property type="match status" value="1"/>
</dbReference>
<dbReference type="InterPro" id="IPR047873">
    <property type="entry name" value="Ribosomal_uL16"/>
</dbReference>
<dbReference type="InterPro" id="IPR018255">
    <property type="entry name" value="Ribosomal_uL16_CS_euk_arc"/>
</dbReference>
<dbReference type="InterPro" id="IPR016180">
    <property type="entry name" value="Ribosomal_uL16_dom"/>
</dbReference>
<dbReference type="InterPro" id="IPR001197">
    <property type="entry name" value="Ribosomal_uL16_euk_arch"/>
</dbReference>
<dbReference type="InterPro" id="IPR036920">
    <property type="entry name" value="Ribosomal_uL16_sf"/>
</dbReference>
<dbReference type="NCBIfam" id="NF003239">
    <property type="entry name" value="PRK04199.1-4"/>
    <property type="match status" value="1"/>
</dbReference>
<dbReference type="NCBIfam" id="TIGR00279">
    <property type="entry name" value="uL16_euk_arch"/>
    <property type="match status" value="1"/>
</dbReference>
<dbReference type="PANTHER" id="PTHR11726">
    <property type="entry name" value="60S RIBOSOMAL PROTEIN L10"/>
    <property type="match status" value="1"/>
</dbReference>
<dbReference type="Pfam" id="PF00252">
    <property type="entry name" value="Ribosomal_L16"/>
    <property type="match status" value="1"/>
</dbReference>
<dbReference type="PIRSF" id="PIRSF005590">
    <property type="entry name" value="Ribosomal_L10"/>
    <property type="match status" value="1"/>
</dbReference>
<dbReference type="SUPFAM" id="SSF54686">
    <property type="entry name" value="Ribosomal protein L16p/L10e"/>
    <property type="match status" value="1"/>
</dbReference>
<dbReference type="PROSITE" id="PS01257">
    <property type="entry name" value="RIBOSOMAL_L10E"/>
    <property type="match status" value="1"/>
</dbReference>
<gene>
    <name type="primary">RPL10L</name>
    <name type="ORF">QtsA-10847</name>
</gene>
<sequence length="214" mass="24617">MGRRPARCYRYCKNKPYPKSRFCRGVPDAKIRIFDLGRKKAKVDEFPLCGHMVSDEYEQLSSEALEAARICANKYMVKSCGRDGFHMRVRLHPFHVIRINKMLSCAGADRLQTGMRGAFGKPQGTVARVHIGQVIMSIRTKLQNKEHVIEALRRAKFKFPGRQKIHISKKWGFTKFNADEFEDMVAKKRLIPDGCGVKYVPSHGPLDKWRVLHS</sequence>
<feature type="chain" id="PRO_0000319305" description="Large ribosomal subunit protein uL16-like">
    <location>
        <begin position="1"/>
        <end position="214"/>
    </location>
</feature>
<proteinExistence type="evidence at transcript level"/>
<comment type="function">
    <text evidence="1 2">Testis-specific component of the ribosome, which is required for the transition from prophase to metaphase in male meiosis I (By similarity). Compensates for the inactivated X-linked RPL10 paralog during spermatogenesis. The ribosome is a large ribonucleoprotein complex responsible for the synthesis of proteins in the cell. The small ribosomal subunit (SSU) binds messenger RNAs (mRNAs) and translates the encoded message by selecting cognate aminoacyl-transfer RNA (tRNA) molecules. The large subunit (LSU) contains the ribosomal catalytic site termed the peptidyl transferase center (PTC), which catalyzes the formation of peptide bonds, thereby polymerizing the amino acids delivered by tRNAs into a polypeptide chain. The nascent polypeptides leave the ribosome through a tunnel in the LSU and interact with protein factors that function in enzymatic processing, targeting, and the membrane insertion of nascent chains at the exit of the ribosomal tunnel (By similarity).</text>
</comment>
<comment type="subunit">
    <text evidence="2">Component of the 60S large ribosomal subunit (LSU).</text>
</comment>
<comment type="subcellular location">
    <subcellularLocation>
        <location evidence="2">Cytoplasm</location>
    </subcellularLocation>
</comment>
<comment type="similarity">
    <text evidence="3">Belongs to the universal ribosomal protein uL16 family.</text>
</comment>
<reference key="1">
    <citation type="submission" date="2005-06" db="EMBL/GenBank/DDBJ databases">
        <title>DNA sequences of macaque genes expressed in brain or testis and its evolutionary implications.</title>
        <authorList>
            <consortium name="International consortium for macaque cDNA sequencing and analysis"/>
        </authorList>
    </citation>
    <scope>NUCLEOTIDE SEQUENCE [LARGE SCALE MRNA]</scope>
    <source>
        <tissue>Testis</tissue>
    </source>
</reference>
<organism>
    <name type="scientific">Macaca fascicularis</name>
    <name type="common">Crab-eating macaque</name>
    <name type="synonym">Cynomolgus monkey</name>
    <dbReference type="NCBI Taxonomy" id="9541"/>
    <lineage>
        <taxon>Eukaryota</taxon>
        <taxon>Metazoa</taxon>
        <taxon>Chordata</taxon>
        <taxon>Craniata</taxon>
        <taxon>Vertebrata</taxon>
        <taxon>Euteleostomi</taxon>
        <taxon>Mammalia</taxon>
        <taxon>Eutheria</taxon>
        <taxon>Euarchontoglires</taxon>
        <taxon>Primates</taxon>
        <taxon>Haplorrhini</taxon>
        <taxon>Catarrhini</taxon>
        <taxon>Cercopithecidae</taxon>
        <taxon>Cercopithecinae</taxon>
        <taxon>Macaca</taxon>
    </lineage>
</organism>
<evidence type="ECO:0000250" key="1">
    <source>
        <dbReference type="UniProtKB" id="P86048"/>
    </source>
</evidence>
<evidence type="ECO:0000250" key="2">
    <source>
        <dbReference type="UniProtKB" id="Q96L21"/>
    </source>
</evidence>
<evidence type="ECO:0000305" key="3"/>
<accession>Q4R4D3</accession>